<keyword id="KW-0067">ATP-binding</keyword>
<keyword id="KW-0173">Coenzyme A biosynthesis</keyword>
<keyword id="KW-0963">Cytoplasm</keyword>
<keyword id="KW-0418">Kinase</keyword>
<keyword id="KW-0547">Nucleotide-binding</keyword>
<keyword id="KW-0630">Potassium</keyword>
<keyword id="KW-1185">Reference proteome</keyword>
<keyword id="KW-0808">Transferase</keyword>
<name>COAX_VEREI</name>
<comment type="function">
    <text evidence="1">Catalyzes the phosphorylation of pantothenate (Pan), the first step in CoA biosynthesis.</text>
</comment>
<comment type="catalytic activity">
    <reaction evidence="1">
        <text>(R)-pantothenate + ATP = (R)-4'-phosphopantothenate + ADP + H(+)</text>
        <dbReference type="Rhea" id="RHEA:16373"/>
        <dbReference type="ChEBI" id="CHEBI:10986"/>
        <dbReference type="ChEBI" id="CHEBI:15378"/>
        <dbReference type="ChEBI" id="CHEBI:29032"/>
        <dbReference type="ChEBI" id="CHEBI:30616"/>
        <dbReference type="ChEBI" id="CHEBI:456216"/>
        <dbReference type="EC" id="2.7.1.33"/>
    </reaction>
</comment>
<comment type="cofactor">
    <cofactor evidence="1">
        <name>NH4(+)</name>
        <dbReference type="ChEBI" id="CHEBI:28938"/>
    </cofactor>
    <cofactor evidence="1">
        <name>K(+)</name>
        <dbReference type="ChEBI" id="CHEBI:29103"/>
    </cofactor>
    <text evidence="1">A monovalent cation. Ammonium or potassium.</text>
</comment>
<comment type="pathway">
    <text evidence="1">Cofactor biosynthesis; coenzyme A biosynthesis; CoA from (R)-pantothenate: step 1/5.</text>
</comment>
<comment type="subunit">
    <text evidence="1">Homodimer.</text>
</comment>
<comment type="subcellular location">
    <subcellularLocation>
        <location evidence="1">Cytoplasm</location>
    </subcellularLocation>
</comment>
<comment type="similarity">
    <text evidence="1">Belongs to the type III pantothenate kinase family.</text>
</comment>
<evidence type="ECO:0000255" key="1">
    <source>
        <dbReference type="HAMAP-Rule" id="MF_01274"/>
    </source>
</evidence>
<reference key="1">
    <citation type="submission" date="2006-12" db="EMBL/GenBank/DDBJ databases">
        <title>Complete sequence of chromosome 1 of Verminephrobacter eiseniae EF01-2.</title>
        <authorList>
            <person name="Copeland A."/>
            <person name="Lucas S."/>
            <person name="Lapidus A."/>
            <person name="Barry K."/>
            <person name="Detter J.C."/>
            <person name="Glavina del Rio T."/>
            <person name="Dalin E."/>
            <person name="Tice H."/>
            <person name="Pitluck S."/>
            <person name="Chertkov O."/>
            <person name="Brettin T."/>
            <person name="Bruce D."/>
            <person name="Han C."/>
            <person name="Tapia R."/>
            <person name="Gilna P."/>
            <person name="Schmutz J."/>
            <person name="Larimer F."/>
            <person name="Land M."/>
            <person name="Hauser L."/>
            <person name="Kyrpides N."/>
            <person name="Kim E."/>
            <person name="Stahl D."/>
            <person name="Richardson P."/>
        </authorList>
    </citation>
    <scope>NUCLEOTIDE SEQUENCE [LARGE SCALE GENOMIC DNA]</scope>
    <source>
        <strain>EF01-2</strain>
    </source>
</reference>
<sequence length="256" mass="27312">MTFLAIDVGNTRLKWALYDAPRAGAALRAHGVEFLDHIDRLAEGSWARLPPPGHMLGCVVAGDAVKRRVQEQMEIWDVTPSWVVASAQEAGLSNGYDHPSRLGADRWVAMIGARQHVLARGPARPLVLVMVGTAVTVECVDAQGRFIGGLILPGHGIMLRALESGTAGLHVPTGEVRLFPTNTSDALTSGGTYAIAGAVERMVQHVIAHCGTEPICLMTGGAGWKVAPSMTRPFELLENLIFDGLLEIAMRRLAAA</sequence>
<organism>
    <name type="scientific">Verminephrobacter eiseniae (strain EF01-2)</name>
    <dbReference type="NCBI Taxonomy" id="391735"/>
    <lineage>
        <taxon>Bacteria</taxon>
        <taxon>Pseudomonadati</taxon>
        <taxon>Pseudomonadota</taxon>
        <taxon>Betaproteobacteria</taxon>
        <taxon>Burkholderiales</taxon>
        <taxon>Comamonadaceae</taxon>
        <taxon>Verminephrobacter</taxon>
    </lineage>
</organism>
<dbReference type="EC" id="2.7.1.33" evidence="1"/>
<dbReference type="EMBL" id="CP000542">
    <property type="protein sequence ID" value="ABM57916.1"/>
    <property type="molecule type" value="Genomic_DNA"/>
</dbReference>
<dbReference type="RefSeq" id="WP_011809922.1">
    <property type="nucleotide sequence ID" value="NC_008786.1"/>
</dbReference>
<dbReference type="SMR" id="A1WJV9"/>
<dbReference type="STRING" id="391735.Veis_2168"/>
<dbReference type="GeneID" id="76460737"/>
<dbReference type="KEGG" id="vei:Veis_2168"/>
<dbReference type="eggNOG" id="COG1521">
    <property type="taxonomic scope" value="Bacteria"/>
</dbReference>
<dbReference type="HOGENOM" id="CLU_066627_0_0_4"/>
<dbReference type="OrthoDB" id="9781305at2"/>
<dbReference type="UniPathway" id="UPA00241">
    <property type="reaction ID" value="UER00352"/>
</dbReference>
<dbReference type="Proteomes" id="UP000000374">
    <property type="component" value="Chromosome"/>
</dbReference>
<dbReference type="GO" id="GO:0005737">
    <property type="term" value="C:cytoplasm"/>
    <property type="evidence" value="ECO:0007669"/>
    <property type="project" value="UniProtKB-SubCell"/>
</dbReference>
<dbReference type="GO" id="GO:0005524">
    <property type="term" value="F:ATP binding"/>
    <property type="evidence" value="ECO:0007669"/>
    <property type="project" value="UniProtKB-UniRule"/>
</dbReference>
<dbReference type="GO" id="GO:0004594">
    <property type="term" value="F:pantothenate kinase activity"/>
    <property type="evidence" value="ECO:0007669"/>
    <property type="project" value="UniProtKB-UniRule"/>
</dbReference>
<dbReference type="GO" id="GO:0015937">
    <property type="term" value="P:coenzyme A biosynthetic process"/>
    <property type="evidence" value="ECO:0007669"/>
    <property type="project" value="UniProtKB-UniRule"/>
</dbReference>
<dbReference type="CDD" id="cd24015">
    <property type="entry name" value="ASKHA_NBD_PanK-III"/>
    <property type="match status" value="1"/>
</dbReference>
<dbReference type="Gene3D" id="3.30.420.40">
    <property type="match status" value="2"/>
</dbReference>
<dbReference type="HAMAP" id="MF_01274">
    <property type="entry name" value="Pantothen_kinase_3"/>
    <property type="match status" value="1"/>
</dbReference>
<dbReference type="InterPro" id="IPR043129">
    <property type="entry name" value="ATPase_NBD"/>
</dbReference>
<dbReference type="InterPro" id="IPR004619">
    <property type="entry name" value="Type_III_PanK"/>
</dbReference>
<dbReference type="NCBIfam" id="TIGR00671">
    <property type="entry name" value="baf"/>
    <property type="match status" value="1"/>
</dbReference>
<dbReference type="PANTHER" id="PTHR34265">
    <property type="entry name" value="TYPE III PANTOTHENATE KINASE"/>
    <property type="match status" value="1"/>
</dbReference>
<dbReference type="PANTHER" id="PTHR34265:SF1">
    <property type="entry name" value="TYPE III PANTOTHENATE KINASE"/>
    <property type="match status" value="1"/>
</dbReference>
<dbReference type="Pfam" id="PF03309">
    <property type="entry name" value="Pan_kinase"/>
    <property type="match status" value="1"/>
</dbReference>
<dbReference type="SUPFAM" id="SSF53067">
    <property type="entry name" value="Actin-like ATPase domain"/>
    <property type="match status" value="2"/>
</dbReference>
<gene>
    <name evidence="1" type="primary">coaX</name>
    <name type="ordered locus">Veis_2168</name>
</gene>
<protein>
    <recommendedName>
        <fullName evidence="1">Type III pantothenate kinase</fullName>
        <ecNumber evidence="1">2.7.1.33</ecNumber>
    </recommendedName>
    <alternativeName>
        <fullName evidence="1">PanK-III</fullName>
    </alternativeName>
    <alternativeName>
        <fullName evidence="1">Pantothenic acid kinase</fullName>
    </alternativeName>
</protein>
<accession>A1WJV9</accession>
<feature type="chain" id="PRO_1000054414" description="Type III pantothenate kinase">
    <location>
        <begin position="1"/>
        <end position="256"/>
    </location>
</feature>
<feature type="active site" description="Proton acceptor" evidence="1">
    <location>
        <position position="105"/>
    </location>
</feature>
<feature type="binding site" evidence="1">
    <location>
        <begin position="7"/>
        <end position="14"/>
    </location>
    <ligand>
        <name>ATP</name>
        <dbReference type="ChEBI" id="CHEBI:30616"/>
    </ligand>
</feature>
<feature type="binding site" evidence="1">
    <location>
        <position position="96"/>
    </location>
    <ligand>
        <name>substrate</name>
    </ligand>
</feature>
<feature type="binding site" evidence="1">
    <location>
        <begin position="103"/>
        <end position="106"/>
    </location>
    <ligand>
        <name>substrate</name>
    </ligand>
</feature>
<feature type="binding site" evidence="1">
    <location>
        <position position="133"/>
    </location>
    <ligand>
        <name>ATP</name>
        <dbReference type="ChEBI" id="CHEBI:30616"/>
    </ligand>
</feature>
<feature type="binding site" evidence="1">
    <location>
        <position position="183"/>
    </location>
    <ligand>
        <name>substrate</name>
    </ligand>
</feature>
<proteinExistence type="inferred from homology"/>